<dbReference type="EC" id="2.7.7.108" evidence="3"/>
<dbReference type="EMBL" id="BX897699">
    <property type="protein sequence ID" value="CAF28110.1"/>
    <property type="molecule type" value="Genomic_DNA"/>
</dbReference>
<dbReference type="RefSeq" id="WP_011181138.1">
    <property type="nucleotide sequence ID" value="NZ_LRIJ02000001.1"/>
</dbReference>
<dbReference type="PDB" id="2JK8">
    <property type="method" value="X-ray"/>
    <property type="resolution" value="2.80 A"/>
    <property type="chains" value="A/B=1-302"/>
</dbReference>
<dbReference type="PDB" id="2VY3">
    <property type="method" value="X-ray"/>
    <property type="resolution" value="2.80 A"/>
    <property type="chains" value="A/B=1-302"/>
</dbReference>
<dbReference type="PDB" id="2VZA">
    <property type="method" value="X-ray"/>
    <property type="resolution" value="3.05 A"/>
    <property type="chains" value="A/B/C/D/E/F/G/H=10-303"/>
</dbReference>
<dbReference type="PDB" id="5NH2">
    <property type="method" value="X-ray"/>
    <property type="resolution" value="2.32 A"/>
    <property type="chains" value="A=10-303"/>
</dbReference>
<dbReference type="PDBsum" id="2JK8"/>
<dbReference type="PDBsum" id="2VY3"/>
<dbReference type="PDBsum" id="2VZA"/>
<dbReference type="PDBsum" id="5NH2"/>
<dbReference type="SMR" id="Q6G2A9"/>
<dbReference type="PaxDb" id="283166-BH13370"/>
<dbReference type="EnsemblBacteria" id="CAF28110">
    <property type="protein sequence ID" value="CAF28110"/>
    <property type="gene ID" value="BH13370"/>
</dbReference>
<dbReference type="GeneID" id="92985948"/>
<dbReference type="KEGG" id="bhe:BH13370"/>
<dbReference type="eggNOG" id="COG2184">
    <property type="taxonomic scope" value="Bacteria"/>
</dbReference>
<dbReference type="OrthoDB" id="7926176at2"/>
<dbReference type="EvolutionaryTrace" id="Q6G2A9"/>
<dbReference type="Proteomes" id="UP000000421">
    <property type="component" value="Chromosome"/>
</dbReference>
<dbReference type="GO" id="GO:0005576">
    <property type="term" value="C:extracellular region"/>
    <property type="evidence" value="ECO:0007669"/>
    <property type="project" value="UniProtKB-SubCell"/>
</dbReference>
<dbReference type="GO" id="GO:0070733">
    <property type="term" value="F:AMPylase activity"/>
    <property type="evidence" value="ECO:0000314"/>
    <property type="project" value="UniProtKB"/>
</dbReference>
<dbReference type="GO" id="GO:0005524">
    <property type="term" value="F:ATP binding"/>
    <property type="evidence" value="ECO:0007669"/>
    <property type="project" value="UniProtKB-KW"/>
</dbReference>
<dbReference type="GO" id="GO:0018117">
    <property type="term" value="P:protein adenylylation"/>
    <property type="evidence" value="ECO:0000314"/>
    <property type="project" value="UniProtKB"/>
</dbReference>
<dbReference type="GO" id="GO:0051302">
    <property type="term" value="P:regulation of cell division"/>
    <property type="evidence" value="ECO:0007669"/>
    <property type="project" value="TreeGrafter"/>
</dbReference>
<dbReference type="GO" id="GO:0033668">
    <property type="term" value="P:symbiont-mediated suppression of host apoptosis"/>
    <property type="evidence" value="ECO:0000269"/>
    <property type="project" value="SigSci"/>
</dbReference>
<dbReference type="FunFam" id="1.10.3290.10:FF:000009">
    <property type="entry name" value="Protein adenylyltransferase"/>
    <property type="match status" value="1"/>
</dbReference>
<dbReference type="Gene3D" id="1.10.3290.10">
    <property type="entry name" value="Fido-like domain"/>
    <property type="match status" value="1"/>
</dbReference>
<dbReference type="Gene3D" id="2.40.50.140">
    <property type="entry name" value="Nucleic acid-binding proteins"/>
    <property type="match status" value="1"/>
</dbReference>
<dbReference type="InterPro" id="IPR040548">
    <property type="entry name" value="BepA_ID"/>
</dbReference>
<dbReference type="InterPro" id="IPR003812">
    <property type="entry name" value="Fido"/>
</dbReference>
<dbReference type="InterPro" id="IPR036597">
    <property type="entry name" value="Fido-like_dom_sf"/>
</dbReference>
<dbReference type="InterPro" id="IPR012340">
    <property type="entry name" value="NA-bd_OB-fold"/>
</dbReference>
<dbReference type="NCBIfam" id="NF033856">
    <property type="entry name" value="T4SS_effec_BID"/>
    <property type="match status" value="1"/>
</dbReference>
<dbReference type="PANTHER" id="PTHR39560">
    <property type="entry name" value="PROTEIN ADENYLYLTRANSFERASE FIC-RELATED"/>
    <property type="match status" value="1"/>
</dbReference>
<dbReference type="PANTHER" id="PTHR39560:SF1">
    <property type="entry name" value="PROTEIN ADENYLYLTRANSFERASE FIC-RELATED"/>
    <property type="match status" value="1"/>
</dbReference>
<dbReference type="Pfam" id="PF02661">
    <property type="entry name" value="Fic"/>
    <property type="match status" value="1"/>
</dbReference>
<dbReference type="Pfam" id="PF18543">
    <property type="entry name" value="ID"/>
    <property type="match status" value="1"/>
</dbReference>
<dbReference type="SUPFAM" id="SSF140931">
    <property type="entry name" value="Fic-like"/>
    <property type="match status" value="1"/>
</dbReference>
<dbReference type="PROSITE" id="PS51459">
    <property type="entry name" value="FIDO"/>
    <property type="match status" value="1"/>
</dbReference>
<reference key="1">
    <citation type="journal article" date="2004" name="Proc. Natl. Acad. Sci. U.S.A.">
        <title>The louse-borne human pathogen Bartonella quintana is a genomic derivative of the zoonotic agent Bartonella henselae.</title>
        <authorList>
            <person name="Alsmark U.C.M."/>
            <person name="Frank A.C."/>
            <person name="Karlberg E.O."/>
            <person name="Legault B.-A."/>
            <person name="Ardell D.H."/>
            <person name="Canbaeck B."/>
            <person name="Eriksson A.-S."/>
            <person name="Naeslund A.K."/>
            <person name="Handley S.A."/>
            <person name="Huvet M."/>
            <person name="La Scola B."/>
            <person name="Holmberg M."/>
            <person name="Andersson S.G.E."/>
        </authorList>
    </citation>
    <scope>NUCLEOTIDE SEQUENCE [LARGE SCALE GENOMIC DNA]</scope>
    <source>
        <strain>ATCC 49882 / DSM 28221 / CCUG 30454 / Houston 1</strain>
    </source>
</reference>
<reference key="2">
    <citation type="journal article" date="2011" name="Protein Sci.">
        <title>Fic domain-catalyzed adenylylation: insight provided by the structural analysis of the type IV secretion system effector BepA.</title>
        <authorList>
            <person name="Palanivelu D.V."/>
            <person name="Goepfert A."/>
            <person name="Meury M."/>
            <person name="Guye P."/>
            <person name="Dehio C."/>
            <person name="Schirmer T."/>
        </authorList>
    </citation>
    <scope>X-RAY CRYSTALLOGRAPHY (2.80 ANGSTROMS) OF 1-302 IN COMPLEX WITH ATP</scope>
    <scope>CATALYTIC ACTIVITY</scope>
    <scope>FUNCTION</scope>
</reference>
<feature type="chain" id="PRO_0000417552" description="Protein adenylyltransferase">
    <location>
        <begin position="1"/>
        <end position="544"/>
    </location>
</feature>
<feature type="domain" description="Fido" evidence="2">
    <location>
        <begin position="63"/>
        <end position="216"/>
    </location>
</feature>
<feature type="binding site" evidence="1">
    <location>
        <begin position="93"/>
        <end position="94"/>
    </location>
    <ligand>
        <name>ATP</name>
        <dbReference type="ChEBI" id="CHEBI:30616"/>
    </ligand>
</feature>
<feature type="binding site" evidence="1">
    <location>
        <begin position="106"/>
        <end position="107"/>
    </location>
    <ligand>
        <name>ATP</name>
        <dbReference type="ChEBI" id="CHEBI:30616"/>
    </ligand>
</feature>
<feature type="binding site" evidence="3">
    <location>
        <begin position="163"/>
        <end position="167"/>
    </location>
    <ligand>
        <name>ATP</name>
        <dbReference type="ChEBI" id="CHEBI:30616"/>
    </ligand>
</feature>
<feature type="binding site" evidence="1">
    <location>
        <position position="170"/>
    </location>
    <ligand>
        <name>ATP</name>
        <dbReference type="ChEBI" id="CHEBI:30616"/>
    </ligand>
</feature>
<feature type="helix" evidence="5">
    <location>
        <begin position="16"/>
        <end position="19"/>
    </location>
</feature>
<feature type="strand" evidence="4">
    <location>
        <begin position="24"/>
        <end position="27"/>
    </location>
</feature>
<feature type="helix" evidence="5">
    <location>
        <begin position="36"/>
        <end position="54"/>
    </location>
</feature>
<feature type="helix" evidence="5">
    <location>
        <begin position="65"/>
        <end position="76"/>
    </location>
</feature>
<feature type="turn" evidence="5">
    <location>
        <begin position="77"/>
        <end position="79"/>
    </location>
</feature>
<feature type="turn" evidence="5">
    <location>
        <begin position="81"/>
        <end position="84"/>
    </location>
</feature>
<feature type="helix" evidence="5">
    <location>
        <begin position="117"/>
        <end position="132"/>
    </location>
</feature>
<feature type="helix" evidence="5">
    <location>
        <begin position="134"/>
        <end position="136"/>
    </location>
</feature>
<feature type="helix" evidence="5">
    <location>
        <begin position="141"/>
        <end position="158"/>
    </location>
</feature>
<feature type="strand" evidence="5">
    <location>
        <begin position="161"/>
        <end position="163"/>
    </location>
</feature>
<feature type="helix" evidence="5">
    <location>
        <begin position="165"/>
        <end position="179"/>
    </location>
</feature>
<feature type="helix" evidence="5">
    <location>
        <begin position="186"/>
        <end position="188"/>
    </location>
</feature>
<feature type="helix" evidence="5">
    <location>
        <begin position="191"/>
        <end position="204"/>
    </location>
</feature>
<feature type="helix" evidence="5">
    <location>
        <begin position="208"/>
        <end position="216"/>
    </location>
</feature>
<feature type="helix" evidence="5">
    <location>
        <begin position="220"/>
        <end position="235"/>
    </location>
</feature>
<feature type="helix" evidence="4">
    <location>
        <begin position="240"/>
        <end position="242"/>
    </location>
</feature>
<feature type="strand" evidence="5">
    <location>
        <begin position="245"/>
        <end position="247"/>
    </location>
</feature>
<feature type="strand" evidence="5">
    <location>
        <begin position="253"/>
        <end position="261"/>
    </location>
</feature>
<feature type="strand" evidence="5">
    <location>
        <begin position="263"/>
        <end position="270"/>
    </location>
</feature>
<feature type="strand" evidence="5">
    <location>
        <begin position="273"/>
        <end position="278"/>
    </location>
</feature>
<feature type="helix" evidence="5">
    <location>
        <begin position="279"/>
        <end position="281"/>
    </location>
</feature>
<feature type="helix" evidence="5">
    <location>
        <begin position="284"/>
        <end position="287"/>
    </location>
</feature>
<feature type="strand" evidence="5">
    <location>
        <begin position="295"/>
        <end position="299"/>
    </location>
</feature>
<name>BEPA_BARHE</name>
<organism>
    <name type="scientific">Bartonella henselae (strain ATCC 49882 / DSM 28221 / CCUG 30454 / Houston 1)</name>
    <name type="common">Rochalimaea henselae</name>
    <dbReference type="NCBI Taxonomy" id="283166"/>
    <lineage>
        <taxon>Bacteria</taxon>
        <taxon>Pseudomonadati</taxon>
        <taxon>Pseudomonadota</taxon>
        <taxon>Alphaproteobacteria</taxon>
        <taxon>Hyphomicrobiales</taxon>
        <taxon>Bartonellaceae</taxon>
        <taxon>Bartonella</taxon>
    </lineage>
</organism>
<keyword id="KW-0002">3D-structure</keyword>
<keyword id="KW-0067">ATP-binding</keyword>
<keyword id="KW-0547">Nucleotide-binding</keyword>
<keyword id="KW-0548">Nucleotidyltransferase</keyword>
<keyword id="KW-0964">Secreted</keyword>
<keyword id="KW-0808">Transferase</keyword>
<keyword id="KW-0843">Virulence</keyword>
<comment type="function">
    <text evidence="3">Adenylyltransferase involved in virulence by mediating the addition of adenosine 5'-monophosphate (AMP) to specific residue of host target proteins.</text>
</comment>
<comment type="catalytic activity">
    <reaction evidence="3">
        <text>L-tyrosyl-[protein] + ATP = O-(5'-adenylyl)-L-tyrosyl-[protein] + diphosphate</text>
        <dbReference type="Rhea" id="RHEA:54288"/>
        <dbReference type="Rhea" id="RHEA-COMP:10136"/>
        <dbReference type="Rhea" id="RHEA-COMP:13846"/>
        <dbReference type="ChEBI" id="CHEBI:30616"/>
        <dbReference type="ChEBI" id="CHEBI:33019"/>
        <dbReference type="ChEBI" id="CHEBI:46858"/>
        <dbReference type="ChEBI" id="CHEBI:83624"/>
        <dbReference type="EC" id="2.7.7.108"/>
    </reaction>
</comment>
<comment type="catalytic activity">
    <reaction evidence="3">
        <text>L-threonyl-[protein] + ATP = 3-O-(5'-adenylyl)-L-threonyl-[protein] + diphosphate</text>
        <dbReference type="Rhea" id="RHEA:54292"/>
        <dbReference type="Rhea" id="RHEA-COMP:11060"/>
        <dbReference type="Rhea" id="RHEA-COMP:13847"/>
        <dbReference type="ChEBI" id="CHEBI:30013"/>
        <dbReference type="ChEBI" id="CHEBI:30616"/>
        <dbReference type="ChEBI" id="CHEBI:33019"/>
        <dbReference type="ChEBI" id="CHEBI:138113"/>
        <dbReference type="EC" id="2.7.7.108"/>
    </reaction>
</comment>
<comment type="subcellular location">
    <subcellularLocation>
        <location>Secreted</location>
    </subcellularLocation>
    <text>Translocated into the host cell via the type IV secretion system (T4SS).</text>
</comment>
<comment type="domain">
    <text>The fido domain mediates the adenylyltransferase activity.</text>
</comment>
<proteinExistence type="evidence at protein level"/>
<gene>
    <name type="primary">bepA</name>
    <name type="ordered locus">BH13370</name>
</gene>
<accession>Q6G2A9</accession>
<protein>
    <recommendedName>
        <fullName>Protein adenylyltransferase</fullName>
        <ecNumber evidence="3">2.7.7.108</ecNumber>
    </recommendedName>
    <alternativeName>
        <fullName>AMPylator</fullName>
    </alternativeName>
</protein>
<sequence>MPKAKAKTKNTEIISPHHYVYPNTTTLKNKYGIKNLNAFLEKCSHDTAKAMINLREESLPEYFDTAYLCHIHQQLFKNTFEWAGYLRHIPFTFADGTTAAMPEMKRTGWKNAFAIGDEIQEGLQRLDQTLAEKNNLQGLTREEFNSEAIELFNSLNQLHPFREGNGRTQRLFFENLAKAAGHQLNFSLITKERMMVASVAVAENGDLEPMQHLFEDISNPEKIRLLKEFMHTMKNTGRNVNDRPVMVAKEGETYTGTYRGAGLEGFALNVKGAYIIGNIDHLPPEQLKILKPGDKITFTAPKAEELKKTLIPKETLVPLTKLEIAEMVAEDAFVHTCRDQICSLSKIVYGSQGVLNKNIIEIIKNPSKGQQLATQIERTPYSVHSLAGFDLICFKTGARVRAEKHVALLSCAVANFTHAVKHARQEITKEHQAEQNRLRQEVPMPSQSLQDLLSLPKEFQQKALGVSPLLQKELTSLLQKVNSRLSSSEQRALRENNHETLAKNLGVSEQKAKEITKTVMKAREVQQKSQTRTVSHSKTLAMAS</sequence>
<evidence type="ECO:0000250" key="1"/>
<evidence type="ECO:0000255" key="2">
    <source>
        <dbReference type="PROSITE-ProRule" id="PRU00791"/>
    </source>
</evidence>
<evidence type="ECO:0000269" key="3">
    <source>
    </source>
</evidence>
<evidence type="ECO:0007829" key="4">
    <source>
        <dbReference type="PDB" id="2JK8"/>
    </source>
</evidence>
<evidence type="ECO:0007829" key="5">
    <source>
        <dbReference type="PDB" id="5NH2"/>
    </source>
</evidence>